<evidence type="ECO:0000250" key="1">
    <source>
        <dbReference type="UniProtKB" id="P38557"/>
    </source>
</evidence>
<evidence type="ECO:0000255" key="2"/>
<evidence type="ECO:0000305" key="3"/>
<sequence>MPREIINLQVGQCGNQVGSEFWRKLCQEHGIAKDGRLEDFATLGGDRKDVFFYQADDEQYIPRAILLDLEPRVINGIQTSDLRNLFNPENIFISKEGGGAGNNWASGYTQGEAVQETLLDMIDREAEYCDSLEGFNMCHSIAGGTGSGMGSYMLELISDRYSKKLIQTYSVFPNQSESSDVVVQPYNSLLTLKRLTLHADAVVVLDNTALDKIAVERLHLHKPDVQQINSLIATVMAASTTTLRYPGYMNNDLVGLVASLIPTPRCHFLMTGYTPLTAENAAGQVTSNIRKTTVLDVMRRLLQPKNIMVSTHTKSRDIANAKYISILNIIQGEVDPSQVHKSLQRIRERKQANFIEWGPASIQVALSKKSPYVQTAHRVSGLMLANHTSVRHLFNKVLRDYEKLMGPKQERQAFMQAYRDVPRFADAAGGGTALLEEFADAKEVVQDLANEYAACESADYIQRQMMAS</sequence>
<name>TBG_CHLRE</name>
<gene>
    <name type="primary">TUBG</name>
    <name type="synonym">TBG1</name>
    <name type="synonym">TUBC</name>
</gene>
<accession>Q39582</accession>
<accession>O22417</accession>
<proteinExistence type="inferred from homology"/>
<dbReference type="EMBL" id="U31545">
    <property type="protein sequence ID" value="AAA82610.1"/>
    <property type="molecule type" value="Genomic_DNA"/>
</dbReference>
<dbReference type="EMBL" id="AF013109">
    <property type="protein sequence ID" value="AAB71841.1"/>
    <property type="molecule type" value="Genomic_DNA"/>
</dbReference>
<dbReference type="PIR" id="T07904">
    <property type="entry name" value="T07904"/>
</dbReference>
<dbReference type="PIR" id="T08057">
    <property type="entry name" value="T08057"/>
</dbReference>
<dbReference type="RefSeq" id="XP_001691292.1">
    <property type="nucleotide sequence ID" value="XM_001691240.1"/>
</dbReference>
<dbReference type="SMR" id="Q39582"/>
<dbReference type="PaxDb" id="3055-EDP05025"/>
<dbReference type="EnsemblPlants" id="PNW82912">
    <property type="protein sequence ID" value="PNW82912"/>
    <property type="gene ID" value="CHLRE_06g299300v5"/>
</dbReference>
<dbReference type="Gramene" id="PNW82912">
    <property type="protein sequence ID" value="PNW82912"/>
    <property type="gene ID" value="CHLRE_06g299300v5"/>
</dbReference>
<dbReference type="KEGG" id="cre:CHLRE_06g299300v5"/>
<dbReference type="eggNOG" id="KOG1374">
    <property type="taxonomic scope" value="Eukaryota"/>
</dbReference>
<dbReference type="HOGENOM" id="CLU_015718_1_0_1"/>
<dbReference type="OMA" id="HRYISIL"/>
<dbReference type="OrthoDB" id="10249382at2759"/>
<dbReference type="GO" id="GO:0005737">
    <property type="term" value="C:cytoplasm"/>
    <property type="evidence" value="ECO:0007669"/>
    <property type="project" value="UniProtKB-KW"/>
</dbReference>
<dbReference type="GO" id="GO:0000930">
    <property type="term" value="C:gamma-tubulin complex"/>
    <property type="evidence" value="ECO:0007669"/>
    <property type="project" value="InterPro"/>
</dbReference>
<dbReference type="GO" id="GO:0005874">
    <property type="term" value="C:microtubule"/>
    <property type="evidence" value="ECO:0007669"/>
    <property type="project" value="UniProtKB-KW"/>
</dbReference>
<dbReference type="GO" id="GO:0005525">
    <property type="term" value="F:GTP binding"/>
    <property type="evidence" value="ECO:0007669"/>
    <property type="project" value="UniProtKB-KW"/>
</dbReference>
<dbReference type="GO" id="GO:0031122">
    <property type="term" value="P:cytoplasmic microtubule organization"/>
    <property type="evidence" value="ECO:0007669"/>
    <property type="project" value="InterPro"/>
</dbReference>
<dbReference type="GO" id="GO:0007020">
    <property type="term" value="P:microtubule nucleation"/>
    <property type="evidence" value="ECO:0007669"/>
    <property type="project" value="InterPro"/>
</dbReference>
<dbReference type="CDD" id="cd02188">
    <property type="entry name" value="gamma_tubulin"/>
    <property type="match status" value="1"/>
</dbReference>
<dbReference type="FunFam" id="3.30.1330.20:FF:000003">
    <property type="entry name" value="Tubulin gamma chain"/>
    <property type="match status" value="1"/>
</dbReference>
<dbReference type="FunFam" id="3.40.50.1440:FF:000012">
    <property type="entry name" value="Tubulin gamma chain"/>
    <property type="match status" value="1"/>
</dbReference>
<dbReference type="Gene3D" id="1.10.287.600">
    <property type="entry name" value="Helix hairpin bin"/>
    <property type="match status" value="1"/>
</dbReference>
<dbReference type="Gene3D" id="3.30.1330.20">
    <property type="entry name" value="Tubulin/FtsZ, C-terminal domain"/>
    <property type="match status" value="1"/>
</dbReference>
<dbReference type="Gene3D" id="3.40.50.1440">
    <property type="entry name" value="Tubulin/FtsZ, GTPase domain"/>
    <property type="match status" value="1"/>
</dbReference>
<dbReference type="InterPro" id="IPR002454">
    <property type="entry name" value="Gamma_tubulin"/>
</dbReference>
<dbReference type="InterPro" id="IPR008280">
    <property type="entry name" value="Tub_FtsZ_C"/>
</dbReference>
<dbReference type="InterPro" id="IPR000217">
    <property type="entry name" value="Tubulin"/>
</dbReference>
<dbReference type="InterPro" id="IPR037103">
    <property type="entry name" value="Tubulin/FtsZ-like_C"/>
</dbReference>
<dbReference type="InterPro" id="IPR018316">
    <property type="entry name" value="Tubulin/FtsZ_2-layer-sand-dom"/>
</dbReference>
<dbReference type="InterPro" id="IPR036525">
    <property type="entry name" value="Tubulin/FtsZ_GTPase_sf"/>
</dbReference>
<dbReference type="InterPro" id="IPR023123">
    <property type="entry name" value="Tubulin_C"/>
</dbReference>
<dbReference type="InterPro" id="IPR017975">
    <property type="entry name" value="Tubulin_CS"/>
</dbReference>
<dbReference type="InterPro" id="IPR003008">
    <property type="entry name" value="Tubulin_FtsZ_GTPase"/>
</dbReference>
<dbReference type="PANTHER" id="PTHR11588">
    <property type="entry name" value="TUBULIN"/>
    <property type="match status" value="1"/>
</dbReference>
<dbReference type="Pfam" id="PF00091">
    <property type="entry name" value="Tubulin"/>
    <property type="match status" value="1"/>
</dbReference>
<dbReference type="Pfam" id="PF03953">
    <property type="entry name" value="Tubulin_C"/>
    <property type="match status" value="1"/>
</dbReference>
<dbReference type="PRINTS" id="PR01164">
    <property type="entry name" value="GAMMATUBULIN"/>
</dbReference>
<dbReference type="PRINTS" id="PR01161">
    <property type="entry name" value="TUBULIN"/>
</dbReference>
<dbReference type="SMART" id="SM00864">
    <property type="entry name" value="Tubulin"/>
    <property type="match status" value="1"/>
</dbReference>
<dbReference type="SMART" id="SM00865">
    <property type="entry name" value="Tubulin_C"/>
    <property type="match status" value="1"/>
</dbReference>
<dbReference type="SUPFAM" id="SSF55307">
    <property type="entry name" value="Tubulin C-terminal domain-like"/>
    <property type="match status" value="1"/>
</dbReference>
<dbReference type="SUPFAM" id="SSF52490">
    <property type="entry name" value="Tubulin nucleotide-binding domain-like"/>
    <property type="match status" value="1"/>
</dbReference>
<dbReference type="PROSITE" id="PS00227">
    <property type="entry name" value="TUBULIN"/>
    <property type="match status" value="1"/>
</dbReference>
<comment type="function">
    <text>Tubulin is the major constituent of microtubules. The gamma chain is found at microtubule organizing centers (MTOC) such as the spindle poles, suggesting that it is involved in the minus-end nucleation of microtubule assembly.</text>
</comment>
<comment type="subcellular location">
    <subcellularLocation>
        <location evidence="1">Cytoplasm</location>
        <location evidence="1">Cytoskeleton</location>
        <location evidence="1">Microtubule organizing center</location>
    </subcellularLocation>
</comment>
<comment type="similarity">
    <text evidence="3">Belongs to the tubulin family.</text>
</comment>
<keyword id="KW-0963">Cytoplasm</keyword>
<keyword id="KW-0206">Cytoskeleton</keyword>
<keyword id="KW-0342">GTP-binding</keyword>
<keyword id="KW-0493">Microtubule</keyword>
<keyword id="KW-0547">Nucleotide-binding</keyword>
<protein>
    <recommendedName>
        <fullName>Tubulin gamma chain</fullName>
    </recommendedName>
    <alternativeName>
        <fullName>Gamma-tubulin</fullName>
    </alternativeName>
</protein>
<feature type="chain" id="PRO_0000048451" description="Tubulin gamma chain">
    <location>
        <begin position="1"/>
        <end position="468"/>
    </location>
</feature>
<feature type="binding site" evidence="2">
    <location>
        <begin position="142"/>
        <end position="148"/>
    </location>
    <ligand>
        <name>GTP</name>
        <dbReference type="ChEBI" id="CHEBI:37565"/>
    </ligand>
</feature>
<feature type="sequence conflict" description="In Ref. 2; AAB71841." evidence="3" ref="2">
    <original>R</original>
    <variation>A</variation>
    <location>
        <position position="411"/>
    </location>
</feature>
<organism>
    <name type="scientific">Chlamydomonas reinhardtii</name>
    <name type="common">Chlamydomonas smithii</name>
    <dbReference type="NCBI Taxonomy" id="3055"/>
    <lineage>
        <taxon>Eukaryota</taxon>
        <taxon>Viridiplantae</taxon>
        <taxon>Chlorophyta</taxon>
        <taxon>core chlorophytes</taxon>
        <taxon>Chlorophyceae</taxon>
        <taxon>CS clade</taxon>
        <taxon>Chlamydomonadales</taxon>
        <taxon>Chlamydomonadaceae</taxon>
        <taxon>Chlamydomonas</taxon>
    </lineage>
</organism>
<reference key="1">
    <citation type="journal article" date="1999" name="Cell Motil. Cytoskeleton">
        <title>Gamma-tubulin in Chlamydomonas: characterization of the gene and localization of the gene product in cells.</title>
        <authorList>
            <person name="Silflow C.D."/>
            <person name="Liu B."/>
            <person name="LaVoie M."/>
            <person name="Richardson E.A."/>
            <person name="Palevitz B.A."/>
        </authorList>
    </citation>
    <scope>NUCLEOTIDE SEQUENCE [GENOMIC DNA]</scope>
    <source>
        <strain>21gr / CC-1690</strain>
    </source>
</reference>
<reference key="2">
    <citation type="submission" date="1997-07" db="EMBL/GenBank/DDBJ databases">
        <authorList>
            <person name="Trabuco E.C."/>
            <person name="Dutcher S.K."/>
        </authorList>
    </citation>
    <scope>NUCLEOTIDE SEQUENCE [GENOMIC DNA]</scope>
    <source>
        <strain>137c / CC-125</strain>
    </source>
</reference>